<gene>
    <name evidence="2" type="primary">rluD</name>
    <name type="ordered locus">ZMO0750</name>
</gene>
<sequence length="317" mass="34862">MPTEQVTLTEEMIGWRLDRALASLITRLSRERLKNLISSGCVSNSQGALVRDPAFKIKSLDCFTVDIPLPRPAHNEPQDIPLEIVFEDEHLLVVNKPAGMVVHPAAGNYDNTLVNALLYHCAGKLSGIGGVARPGIVHRIDKDTSGLLVVAKTDPAHAGLAAQFADHSINRRYRAIVDGHPSLQGHVDAPLARSSVNRQKMAIVSDGRGKRAVTHYRMITPLKNASLIECRLETGRTHQVRVHMSSIGHSLLGDPVYGRSKKAHHALLQSLAFQRQALHAAHLGFIHPISGKQVDFDAEMPQDMQLLFKMLMISNRN</sequence>
<name>RLUD_ZYMMO</name>
<comment type="function">
    <text evidence="2">Responsible for synthesis of pseudouridine from uracil at positions 1911, 1915 and 1917 in 23S ribosomal RNA.</text>
</comment>
<comment type="catalytic activity">
    <reaction evidence="2">
        <text>uridine(1911/1915/1917) in 23S rRNA = pseudouridine(1911/1915/1917) in 23S rRNA</text>
        <dbReference type="Rhea" id="RHEA:42524"/>
        <dbReference type="Rhea" id="RHEA-COMP:10097"/>
        <dbReference type="Rhea" id="RHEA-COMP:10098"/>
        <dbReference type="ChEBI" id="CHEBI:65314"/>
        <dbReference type="ChEBI" id="CHEBI:65315"/>
        <dbReference type="EC" id="5.4.99.23"/>
    </reaction>
</comment>
<comment type="subcellular location">
    <subcellularLocation>
        <location evidence="2">Cytoplasm</location>
    </subcellularLocation>
    <text evidence="2">Associates with late stage pre-50S ribosomal subunits.</text>
</comment>
<comment type="similarity">
    <text evidence="4">Belongs to the pseudouridine synthase RluA family.</text>
</comment>
<protein>
    <recommendedName>
        <fullName evidence="2">Ribosomal large subunit pseudouridine synthase D</fullName>
        <ecNumber evidence="2">5.4.99.23</ecNumber>
    </recommendedName>
    <alternativeName>
        <fullName>23S rRNA pseudouridine(1911/1915/1917) synthase</fullName>
    </alternativeName>
    <alternativeName>
        <fullName>rRNA pseudouridylate synthase D</fullName>
    </alternativeName>
    <alternativeName>
        <fullName>rRNA-uridine isomerase D</fullName>
    </alternativeName>
</protein>
<organism>
    <name type="scientific">Zymomonas mobilis subsp. mobilis (strain ATCC 31821 / ZM4 / CP4)</name>
    <dbReference type="NCBI Taxonomy" id="264203"/>
    <lineage>
        <taxon>Bacteria</taxon>
        <taxon>Pseudomonadati</taxon>
        <taxon>Pseudomonadota</taxon>
        <taxon>Alphaproteobacteria</taxon>
        <taxon>Sphingomonadales</taxon>
        <taxon>Zymomonadaceae</taxon>
        <taxon>Zymomonas</taxon>
    </lineage>
</organism>
<keyword id="KW-0963">Cytoplasm</keyword>
<keyword id="KW-0413">Isomerase</keyword>
<keyword id="KW-1185">Reference proteome</keyword>
<keyword id="KW-0694">RNA-binding</keyword>
<keyword id="KW-0698">rRNA processing</keyword>
<dbReference type="EC" id="5.4.99.23" evidence="2"/>
<dbReference type="EMBL" id="D50832">
    <property type="protein sequence ID" value="BAA09443.1"/>
    <property type="molecule type" value="Genomic_DNA"/>
</dbReference>
<dbReference type="EMBL" id="AE008692">
    <property type="protein sequence ID" value="AAV89374.1"/>
    <property type="molecule type" value="Genomic_DNA"/>
</dbReference>
<dbReference type="PIR" id="S60168">
    <property type="entry name" value="S60168"/>
</dbReference>
<dbReference type="RefSeq" id="WP_011240631.1">
    <property type="nucleotide sequence ID" value="NZ_CP035711.1"/>
</dbReference>
<dbReference type="SMR" id="P50513"/>
<dbReference type="STRING" id="264203.ZMO0750"/>
<dbReference type="KEGG" id="zmo:ZMO0750"/>
<dbReference type="eggNOG" id="COG0564">
    <property type="taxonomic scope" value="Bacteria"/>
</dbReference>
<dbReference type="HOGENOM" id="CLU_016902_4_1_5"/>
<dbReference type="Proteomes" id="UP000001173">
    <property type="component" value="Chromosome"/>
</dbReference>
<dbReference type="GO" id="GO:0005737">
    <property type="term" value="C:cytoplasm"/>
    <property type="evidence" value="ECO:0007669"/>
    <property type="project" value="UniProtKB-SubCell"/>
</dbReference>
<dbReference type="GO" id="GO:0160140">
    <property type="term" value="F:23S rRNA pseudouridine(1911/1915/1917) synthase activity"/>
    <property type="evidence" value="ECO:0007669"/>
    <property type="project" value="UniProtKB-EC"/>
</dbReference>
<dbReference type="GO" id="GO:0003723">
    <property type="term" value="F:RNA binding"/>
    <property type="evidence" value="ECO:0007669"/>
    <property type="project" value="UniProtKB-KW"/>
</dbReference>
<dbReference type="GO" id="GO:0000455">
    <property type="term" value="P:enzyme-directed rRNA pseudouridine synthesis"/>
    <property type="evidence" value="ECO:0007669"/>
    <property type="project" value="UniProtKB-ARBA"/>
</dbReference>
<dbReference type="CDD" id="cd02869">
    <property type="entry name" value="PseudoU_synth_RluA_like"/>
    <property type="match status" value="1"/>
</dbReference>
<dbReference type="CDD" id="cd00165">
    <property type="entry name" value="S4"/>
    <property type="match status" value="1"/>
</dbReference>
<dbReference type="FunFam" id="3.30.2350.10:FF:000006">
    <property type="entry name" value="Pseudouridine synthase"/>
    <property type="match status" value="1"/>
</dbReference>
<dbReference type="Gene3D" id="3.30.2350.10">
    <property type="entry name" value="Pseudouridine synthase"/>
    <property type="match status" value="1"/>
</dbReference>
<dbReference type="Gene3D" id="3.10.290.10">
    <property type="entry name" value="RNA-binding S4 domain"/>
    <property type="match status" value="1"/>
</dbReference>
<dbReference type="InterPro" id="IPR020103">
    <property type="entry name" value="PsdUridine_synth_cat_dom_sf"/>
</dbReference>
<dbReference type="InterPro" id="IPR006224">
    <property type="entry name" value="PsdUridine_synth_RluA-like_CS"/>
</dbReference>
<dbReference type="InterPro" id="IPR006225">
    <property type="entry name" value="PsdUridine_synth_RluC/D"/>
</dbReference>
<dbReference type="InterPro" id="IPR006145">
    <property type="entry name" value="PsdUridine_synth_RsuA/RluA"/>
</dbReference>
<dbReference type="InterPro" id="IPR050188">
    <property type="entry name" value="RluA_PseudoU_synthase"/>
</dbReference>
<dbReference type="InterPro" id="IPR002942">
    <property type="entry name" value="S4_RNA-bd"/>
</dbReference>
<dbReference type="InterPro" id="IPR036986">
    <property type="entry name" value="S4_RNA-bd_sf"/>
</dbReference>
<dbReference type="NCBIfam" id="TIGR00005">
    <property type="entry name" value="rluA_subfam"/>
    <property type="match status" value="1"/>
</dbReference>
<dbReference type="PANTHER" id="PTHR21600">
    <property type="entry name" value="MITOCHONDRIAL RNA PSEUDOURIDINE SYNTHASE"/>
    <property type="match status" value="1"/>
</dbReference>
<dbReference type="PANTHER" id="PTHR21600:SF44">
    <property type="entry name" value="RIBOSOMAL LARGE SUBUNIT PSEUDOURIDINE SYNTHASE D"/>
    <property type="match status" value="1"/>
</dbReference>
<dbReference type="Pfam" id="PF00849">
    <property type="entry name" value="PseudoU_synth_2"/>
    <property type="match status" value="1"/>
</dbReference>
<dbReference type="SMART" id="SM00363">
    <property type="entry name" value="S4"/>
    <property type="match status" value="1"/>
</dbReference>
<dbReference type="SUPFAM" id="SSF55120">
    <property type="entry name" value="Pseudouridine synthase"/>
    <property type="match status" value="1"/>
</dbReference>
<dbReference type="PROSITE" id="PS01129">
    <property type="entry name" value="PSI_RLU"/>
    <property type="match status" value="1"/>
</dbReference>
<dbReference type="PROSITE" id="PS50889">
    <property type="entry name" value="S4"/>
    <property type="match status" value="1"/>
</dbReference>
<accession>P50513</accession>
<accession>Q5NPI6</accession>
<feature type="chain" id="PRO_0000162710" description="Ribosomal large subunit pseudouridine synthase D">
    <location>
        <begin position="1"/>
        <end position="317"/>
    </location>
</feature>
<feature type="domain" description="S4 RNA-binding" evidence="3">
    <location>
        <begin position="15"/>
        <end position="89"/>
    </location>
</feature>
<feature type="active site" evidence="1">
    <location>
        <position position="141"/>
    </location>
</feature>
<feature type="sequence conflict" description="In Ref. 1; BAA09443." evidence="4" ref="1">
    <original>H</original>
    <variation>N</variation>
    <location>
        <position position="180"/>
    </location>
</feature>
<feature type="sequence conflict" description="In Ref. 1; BAA09443." evidence="4" ref="1">
    <original>R</original>
    <variation>C</variation>
    <location>
        <position position="217"/>
    </location>
</feature>
<proteinExistence type="inferred from homology"/>
<evidence type="ECO:0000250" key="1"/>
<evidence type="ECO:0000250" key="2">
    <source>
        <dbReference type="UniProtKB" id="P33643"/>
    </source>
</evidence>
<evidence type="ECO:0000255" key="3">
    <source>
        <dbReference type="PROSITE-ProRule" id="PRU00182"/>
    </source>
</evidence>
<evidence type="ECO:0000305" key="4"/>
<reference key="1">
    <citation type="journal article" date="1995" name="Nucleic Acids Res.">
        <title>Isolation and sequence analysis of rpoH genes encoding sigma 32 homologs from Gram-negative bacteria: conserved mRNA and protein segments for heat shock regulation.</title>
        <authorList>
            <person name="Nakahigashi K."/>
            <person name="Yanagi H."/>
            <person name="Yura T."/>
        </authorList>
    </citation>
    <scope>NUCLEOTIDE SEQUENCE [GENOMIC DNA]</scope>
    <source>
        <strain>ATCC 31821 / ZM4 / CP4</strain>
    </source>
</reference>
<reference key="2">
    <citation type="journal article" date="2005" name="Nat. Biotechnol.">
        <title>The genome sequence of the ethanologenic bacterium Zymomonas mobilis ZM4.</title>
        <authorList>
            <person name="Seo J.-S."/>
            <person name="Chong H."/>
            <person name="Park H.S."/>
            <person name="Yoon K.-O."/>
            <person name="Jung C."/>
            <person name="Kim J.J."/>
            <person name="Hong J.H."/>
            <person name="Kim H."/>
            <person name="Kim J.-H."/>
            <person name="Kil J.-I."/>
            <person name="Park C.J."/>
            <person name="Oh H.-M."/>
            <person name="Lee J.-S."/>
            <person name="Jin S.-J."/>
            <person name="Um H.-W."/>
            <person name="Lee H.-J."/>
            <person name="Oh S.-J."/>
            <person name="Kim J.Y."/>
            <person name="Kang H.L."/>
            <person name="Lee S.Y."/>
            <person name="Lee K.J."/>
            <person name="Kang H.S."/>
        </authorList>
    </citation>
    <scope>NUCLEOTIDE SEQUENCE [LARGE SCALE GENOMIC DNA]</scope>
    <source>
        <strain>ATCC 31821 / ZM4 / CP4</strain>
    </source>
</reference>